<gene>
    <name type="primary">ABD1</name>
    <name type="ORF">LELG_02969</name>
</gene>
<feature type="chain" id="PRO_0000303910" description="mRNA cap guanine-N(7) methyltransferase">
    <location>
        <begin position="1"/>
        <end position="572"/>
    </location>
</feature>
<feature type="domain" description="mRNA cap 0 methyltransferase" evidence="3">
    <location>
        <begin position="262"/>
        <end position="571"/>
    </location>
</feature>
<feature type="region of interest" description="Disordered" evidence="4">
    <location>
        <begin position="1"/>
        <end position="75"/>
    </location>
</feature>
<feature type="region of interest" description="Disordered" evidence="4">
    <location>
        <begin position="110"/>
        <end position="140"/>
    </location>
</feature>
<feature type="compositionally biased region" description="Basic and acidic residues" evidence="4">
    <location>
        <begin position="24"/>
        <end position="39"/>
    </location>
</feature>
<feature type="compositionally biased region" description="Basic and acidic residues" evidence="4">
    <location>
        <begin position="59"/>
        <end position="69"/>
    </location>
</feature>
<feature type="compositionally biased region" description="Low complexity" evidence="4">
    <location>
        <begin position="123"/>
        <end position="140"/>
    </location>
</feature>
<feature type="binding site" evidence="3">
    <location>
        <begin position="271"/>
        <end position="272"/>
    </location>
    <ligand>
        <name>mRNA</name>
        <dbReference type="ChEBI" id="CHEBI:33699"/>
    </ligand>
    <ligandPart>
        <name>mRNA cap</name>
    </ligandPart>
</feature>
<feature type="binding site" evidence="3">
    <location>
        <position position="275"/>
    </location>
    <ligand>
        <name>S-adenosyl-L-methionine</name>
        <dbReference type="ChEBI" id="CHEBI:59789"/>
    </ligand>
</feature>
<feature type="binding site" evidence="3">
    <location>
        <position position="302"/>
    </location>
    <ligand>
        <name>S-adenosyl-L-methionine</name>
        <dbReference type="ChEBI" id="CHEBI:59789"/>
    </ligand>
</feature>
<feature type="binding site" evidence="3">
    <location>
        <position position="324"/>
    </location>
    <ligand>
        <name>S-adenosyl-L-methionine</name>
        <dbReference type="ChEBI" id="CHEBI:59789"/>
    </ligand>
</feature>
<feature type="binding site" evidence="2">
    <location>
        <position position="366"/>
    </location>
    <ligand>
        <name>S-adenosyl-L-methionine</name>
        <dbReference type="ChEBI" id="CHEBI:59789"/>
    </ligand>
</feature>
<feature type="binding site" evidence="2">
    <location>
        <position position="396"/>
    </location>
    <ligand>
        <name>S-adenosyl-L-methionine</name>
        <dbReference type="ChEBI" id="CHEBI:59789"/>
    </ligand>
</feature>
<feature type="binding site" evidence="2">
    <location>
        <position position="401"/>
    </location>
    <ligand>
        <name>S-adenosyl-L-methionine</name>
        <dbReference type="ChEBI" id="CHEBI:59789"/>
    </ligand>
</feature>
<feature type="site" description="mRNA cap binding" evidence="3">
    <location>
        <position position="305"/>
    </location>
</feature>
<feature type="site" description="mRNA cap binding" evidence="3">
    <location>
        <position position="311"/>
    </location>
</feature>
<feature type="site" description="mRNA cap binding" evidence="3">
    <location>
        <position position="336"/>
    </location>
</feature>
<feature type="site" description="mRNA cap binding" evidence="3">
    <location>
        <position position="400"/>
    </location>
</feature>
<feature type="site" description="mRNA cap binding" evidence="3">
    <location>
        <position position="495"/>
    </location>
</feature>
<feature type="site" description="mRNA cap binding" evidence="3">
    <location>
        <position position="563"/>
    </location>
</feature>
<comment type="function">
    <text evidence="1">Responsible for methylating the 5'-cap structure of mRNAs.</text>
</comment>
<comment type="catalytic activity">
    <reaction evidence="2 3">
        <text>a 5'-end (5'-triphosphoguanosine)-ribonucleoside in mRNA + S-adenosyl-L-methionine = a 5'-end (N(7)-methyl 5'-triphosphoguanosine)-ribonucleoside in mRNA + S-adenosyl-L-homocysteine</text>
        <dbReference type="Rhea" id="RHEA:67008"/>
        <dbReference type="Rhea" id="RHEA-COMP:17166"/>
        <dbReference type="Rhea" id="RHEA-COMP:17167"/>
        <dbReference type="ChEBI" id="CHEBI:57856"/>
        <dbReference type="ChEBI" id="CHEBI:59789"/>
        <dbReference type="ChEBI" id="CHEBI:156461"/>
        <dbReference type="ChEBI" id="CHEBI:167617"/>
        <dbReference type="EC" id="2.1.1.56"/>
    </reaction>
</comment>
<comment type="subcellular location">
    <subcellularLocation>
        <location evidence="1">Nucleus</location>
    </subcellularLocation>
</comment>
<comment type="similarity">
    <text evidence="3">Belongs to the class I-like SAM-binding methyltransferase superfamily. mRNA cap 0 methyltransferase family.</text>
</comment>
<dbReference type="EC" id="2.1.1.56" evidence="2"/>
<dbReference type="EMBL" id="CH981526">
    <property type="protein sequence ID" value="EDK44790.1"/>
    <property type="molecule type" value="Genomic_DNA"/>
</dbReference>
<dbReference type="RefSeq" id="XP_001526411.1">
    <property type="nucleotide sequence ID" value="XM_001526361.1"/>
</dbReference>
<dbReference type="SMR" id="A5E032"/>
<dbReference type="FunCoup" id="A5E032">
    <property type="interactions" value="1000"/>
</dbReference>
<dbReference type="STRING" id="379508.A5E032"/>
<dbReference type="GeneID" id="5232939"/>
<dbReference type="KEGG" id="lel:PVL30_003793"/>
<dbReference type="VEuPathDB" id="FungiDB:LELG_02969"/>
<dbReference type="eggNOG" id="KOG1975">
    <property type="taxonomic scope" value="Eukaryota"/>
</dbReference>
<dbReference type="HOGENOM" id="CLU_020346_2_0_1"/>
<dbReference type="InParanoid" id="A5E032"/>
<dbReference type="OrthoDB" id="10248867at2759"/>
<dbReference type="Proteomes" id="UP000001996">
    <property type="component" value="Unassembled WGS sequence"/>
</dbReference>
<dbReference type="GO" id="GO:0005634">
    <property type="term" value="C:nucleus"/>
    <property type="evidence" value="ECO:0007669"/>
    <property type="project" value="UniProtKB-SubCell"/>
</dbReference>
<dbReference type="GO" id="GO:0004482">
    <property type="term" value="F:mRNA 5'-cap (guanine-N7-)-methyltransferase activity"/>
    <property type="evidence" value="ECO:0007669"/>
    <property type="project" value="UniProtKB-EC"/>
</dbReference>
<dbReference type="GO" id="GO:0003723">
    <property type="term" value="F:RNA binding"/>
    <property type="evidence" value="ECO:0007669"/>
    <property type="project" value="UniProtKB-KW"/>
</dbReference>
<dbReference type="FunFam" id="3.40.50.150:FF:000280">
    <property type="entry name" value="mRNA cap guanine-N7 methyltransferase"/>
    <property type="match status" value="1"/>
</dbReference>
<dbReference type="Gene3D" id="3.40.50.150">
    <property type="entry name" value="Vaccinia Virus protein VP39"/>
    <property type="match status" value="1"/>
</dbReference>
<dbReference type="InterPro" id="IPR004971">
    <property type="entry name" value="mRNA_G-N7_MeTrfase_dom"/>
</dbReference>
<dbReference type="InterPro" id="IPR039753">
    <property type="entry name" value="RG7MT1"/>
</dbReference>
<dbReference type="InterPro" id="IPR029063">
    <property type="entry name" value="SAM-dependent_MTases_sf"/>
</dbReference>
<dbReference type="PANTHER" id="PTHR12189:SF2">
    <property type="entry name" value="MRNA CAP GUANINE-N7 METHYLTRANSFERASE"/>
    <property type="match status" value="1"/>
</dbReference>
<dbReference type="PANTHER" id="PTHR12189">
    <property type="entry name" value="MRNA GUANINE-7- METHYLTRANSFERASE"/>
    <property type="match status" value="1"/>
</dbReference>
<dbReference type="Pfam" id="PF03291">
    <property type="entry name" value="mRNA_G-N7_MeTrfase"/>
    <property type="match status" value="1"/>
</dbReference>
<dbReference type="SUPFAM" id="SSF53335">
    <property type="entry name" value="S-adenosyl-L-methionine-dependent methyltransferases"/>
    <property type="match status" value="1"/>
</dbReference>
<dbReference type="PROSITE" id="PS51562">
    <property type="entry name" value="RNA_CAP0_MT"/>
    <property type="match status" value="1"/>
</dbReference>
<reference key="1">
    <citation type="journal article" date="2009" name="Nature">
        <title>Evolution of pathogenicity and sexual reproduction in eight Candida genomes.</title>
        <authorList>
            <person name="Butler G."/>
            <person name="Rasmussen M.D."/>
            <person name="Lin M.F."/>
            <person name="Santos M.A.S."/>
            <person name="Sakthikumar S."/>
            <person name="Munro C.A."/>
            <person name="Rheinbay E."/>
            <person name="Grabherr M."/>
            <person name="Forche A."/>
            <person name="Reedy J.L."/>
            <person name="Agrafioti I."/>
            <person name="Arnaud M.B."/>
            <person name="Bates S."/>
            <person name="Brown A.J.P."/>
            <person name="Brunke S."/>
            <person name="Costanzo M.C."/>
            <person name="Fitzpatrick D.A."/>
            <person name="de Groot P.W.J."/>
            <person name="Harris D."/>
            <person name="Hoyer L.L."/>
            <person name="Hube B."/>
            <person name="Klis F.M."/>
            <person name="Kodira C."/>
            <person name="Lennard N."/>
            <person name="Logue M.E."/>
            <person name="Martin R."/>
            <person name="Neiman A.M."/>
            <person name="Nikolaou E."/>
            <person name="Quail M.A."/>
            <person name="Quinn J."/>
            <person name="Santos M.C."/>
            <person name="Schmitzberger F.F."/>
            <person name="Sherlock G."/>
            <person name="Shah P."/>
            <person name="Silverstein K.A.T."/>
            <person name="Skrzypek M.S."/>
            <person name="Soll D."/>
            <person name="Staggs R."/>
            <person name="Stansfield I."/>
            <person name="Stumpf M.P.H."/>
            <person name="Sudbery P.E."/>
            <person name="Srikantha T."/>
            <person name="Zeng Q."/>
            <person name="Berman J."/>
            <person name="Berriman M."/>
            <person name="Heitman J."/>
            <person name="Gow N.A.R."/>
            <person name="Lorenz M.C."/>
            <person name="Birren B.W."/>
            <person name="Kellis M."/>
            <person name="Cuomo C.A."/>
        </authorList>
    </citation>
    <scope>NUCLEOTIDE SEQUENCE [LARGE SCALE GENOMIC DNA]</scope>
    <source>
        <strain>ATCC 11503 / BCRC 21390 / CBS 2605 / JCM 1781 / NBRC 1676 / NRRL YB-4239</strain>
    </source>
</reference>
<organism>
    <name type="scientific">Lodderomyces elongisporus (strain ATCC 11503 / CBS 2605 / JCM 1781 / NBRC 1676 / NRRL YB-4239)</name>
    <name type="common">Yeast</name>
    <name type="synonym">Saccharomyces elongisporus</name>
    <dbReference type="NCBI Taxonomy" id="379508"/>
    <lineage>
        <taxon>Eukaryota</taxon>
        <taxon>Fungi</taxon>
        <taxon>Dikarya</taxon>
        <taxon>Ascomycota</taxon>
        <taxon>Saccharomycotina</taxon>
        <taxon>Pichiomycetes</taxon>
        <taxon>Debaryomycetaceae</taxon>
        <taxon>Candida/Lodderomyces clade</taxon>
        <taxon>Lodderomyces</taxon>
    </lineage>
</organism>
<sequence>MPEDSYIPQAKNDGAFQDLKRRRANDGHTEFSRRDRVHDVQPASIYSNVKENKPAWMRSADENKDKKYDQYGSRVDNGTLQQSLGVAKQVPTASASTTTVSAKVESFSAEKAINTANPPPPSTTTTPSSTTSSSSSFPSSSSLYLKYGNIGLGGRGTDPRMDRVKRNREQLEQSLSIREHLAVEENVNDEGSQPKGDGEVNPYLHLDVANPSVIHTQRDEAHYRTFHSKISDRENRDINSIVRQHYNERTQQSKRQGRRTMSPIYKLRNFNNTIKYILLGNWAKYSSAEGNAPKIFSVLDLCCGKGGDLNKCEFIEIDQYIGIDISDLSVREAFSRYSKQKARFKSHSGARTANKYNFEACFATGDCFTETVPDILEPNFPGIIDQAFPVDAVSIQFALHYAFETEEKVRALLVNVAKSLRVGGTFIGTIPSSDFIRSKIVEKNILKDENGKFKFGNSLYSATFDKEPPADGVFRPAFGNRYTYWLKDAVDNVPEYVVPFETLRALCEEYNMTLRYKKNFIDVFNQEIPKYFSKLNKSLVEGLKRSDGKYGAEGEEKEAVAFYVAFVFEKVT</sequence>
<keyword id="KW-0489">Methyltransferase</keyword>
<keyword id="KW-0506">mRNA capping</keyword>
<keyword id="KW-0507">mRNA processing</keyword>
<keyword id="KW-0539">Nucleus</keyword>
<keyword id="KW-1185">Reference proteome</keyword>
<keyword id="KW-0694">RNA-binding</keyword>
<keyword id="KW-0949">S-adenosyl-L-methionine</keyword>
<keyword id="KW-0808">Transferase</keyword>
<name>MCES_LODEL</name>
<accession>A5E032</accession>
<evidence type="ECO:0000250" key="1"/>
<evidence type="ECO:0000250" key="2">
    <source>
        <dbReference type="UniProtKB" id="O43148"/>
    </source>
</evidence>
<evidence type="ECO:0000255" key="3">
    <source>
        <dbReference type="PROSITE-ProRule" id="PRU00895"/>
    </source>
</evidence>
<evidence type="ECO:0000256" key="4">
    <source>
        <dbReference type="SAM" id="MobiDB-lite"/>
    </source>
</evidence>
<protein>
    <recommendedName>
        <fullName>mRNA cap guanine-N(7) methyltransferase</fullName>
        <ecNumber evidence="2">2.1.1.56</ecNumber>
    </recommendedName>
    <alternativeName>
        <fullName>mRNA (guanine-N(7))-methyltransferase</fullName>
    </alternativeName>
    <alternativeName>
        <fullName>mRNA cap methyltransferase</fullName>
    </alternativeName>
</protein>
<proteinExistence type="inferred from homology"/>